<accession>A8ETK5</accession>
<evidence type="ECO:0000255" key="1">
    <source>
        <dbReference type="HAMAP-Rule" id="MF_01306"/>
    </source>
</evidence>
<evidence type="ECO:0000305" key="2"/>
<organism>
    <name type="scientific">Aliarcobacter butzleri (strain RM4018)</name>
    <name type="common">Arcobacter butzleri</name>
    <dbReference type="NCBI Taxonomy" id="367737"/>
    <lineage>
        <taxon>Bacteria</taxon>
        <taxon>Pseudomonadati</taxon>
        <taxon>Campylobacterota</taxon>
        <taxon>Epsilonproteobacteria</taxon>
        <taxon>Campylobacterales</taxon>
        <taxon>Arcobacteraceae</taxon>
        <taxon>Aliarcobacter</taxon>
    </lineage>
</organism>
<proteinExistence type="inferred from homology"/>
<protein>
    <recommendedName>
        <fullName evidence="1">Small ribosomal subunit protein uS4</fullName>
    </recommendedName>
    <alternativeName>
        <fullName evidence="2">30S ribosomal protein S4</fullName>
    </alternativeName>
</protein>
<dbReference type="EMBL" id="CP000361">
    <property type="protein sequence ID" value="ABV67279.1"/>
    <property type="molecule type" value="Genomic_DNA"/>
</dbReference>
<dbReference type="RefSeq" id="WP_004509208.1">
    <property type="nucleotide sequence ID" value="NC_009850.1"/>
</dbReference>
<dbReference type="SMR" id="A8ETK5"/>
<dbReference type="STRING" id="367737.Abu_1019"/>
<dbReference type="GeneID" id="24304131"/>
<dbReference type="KEGG" id="abu:Abu_1019"/>
<dbReference type="eggNOG" id="COG0522">
    <property type="taxonomic scope" value="Bacteria"/>
</dbReference>
<dbReference type="HOGENOM" id="CLU_092403_0_2_7"/>
<dbReference type="Proteomes" id="UP000001136">
    <property type="component" value="Chromosome"/>
</dbReference>
<dbReference type="GO" id="GO:0015935">
    <property type="term" value="C:small ribosomal subunit"/>
    <property type="evidence" value="ECO:0007669"/>
    <property type="project" value="InterPro"/>
</dbReference>
<dbReference type="GO" id="GO:0019843">
    <property type="term" value="F:rRNA binding"/>
    <property type="evidence" value="ECO:0007669"/>
    <property type="project" value="UniProtKB-UniRule"/>
</dbReference>
<dbReference type="GO" id="GO:0003735">
    <property type="term" value="F:structural constituent of ribosome"/>
    <property type="evidence" value="ECO:0007669"/>
    <property type="project" value="InterPro"/>
</dbReference>
<dbReference type="GO" id="GO:0042274">
    <property type="term" value="P:ribosomal small subunit biogenesis"/>
    <property type="evidence" value="ECO:0007669"/>
    <property type="project" value="TreeGrafter"/>
</dbReference>
<dbReference type="GO" id="GO:0006412">
    <property type="term" value="P:translation"/>
    <property type="evidence" value="ECO:0007669"/>
    <property type="project" value="UniProtKB-UniRule"/>
</dbReference>
<dbReference type="CDD" id="cd00165">
    <property type="entry name" value="S4"/>
    <property type="match status" value="1"/>
</dbReference>
<dbReference type="FunFam" id="1.10.1050.10:FF:000001">
    <property type="entry name" value="30S ribosomal protein S4"/>
    <property type="match status" value="1"/>
</dbReference>
<dbReference type="FunFam" id="3.10.290.10:FF:000001">
    <property type="entry name" value="30S ribosomal protein S4"/>
    <property type="match status" value="1"/>
</dbReference>
<dbReference type="Gene3D" id="1.10.1050.10">
    <property type="entry name" value="Ribosomal Protein S4 Delta 41, Chain A, domain 1"/>
    <property type="match status" value="1"/>
</dbReference>
<dbReference type="Gene3D" id="3.10.290.10">
    <property type="entry name" value="RNA-binding S4 domain"/>
    <property type="match status" value="1"/>
</dbReference>
<dbReference type="HAMAP" id="MF_01306_B">
    <property type="entry name" value="Ribosomal_uS4_B"/>
    <property type="match status" value="1"/>
</dbReference>
<dbReference type="InterPro" id="IPR022801">
    <property type="entry name" value="Ribosomal_uS4"/>
</dbReference>
<dbReference type="InterPro" id="IPR005709">
    <property type="entry name" value="Ribosomal_uS4_bac-type"/>
</dbReference>
<dbReference type="InterPro" id="IPR001912">
    <property type="entry name" value="Ribosomal_uS4_N"/>
</dbReference>
<dbReference type="InterPro" id="IPR002942">
    <property type="entry name" value="S4_RNA-bd"/>
</dbReference>
<dbReference type="InterPro" id="IPR036986">
    <property type="entry name" value="S4_RNA-bd_sf"/>
</dbReference>
<dbReference type="NCBIfam" id="NF003717">
    <property type="entry name" value="PRK05327.1"/>
    <property type="match status" value="1"/>
</dbReference>
<dbReference type="NCBIfam" id="TIGR01017">
    <property type="entry name" value="rpsD_bact"/>
    <property type="match status" value="1"/>
</dbReference>
<dbReference type="PANTHER" id="PTHR11831">
    <property type="entry name" value="30S 40S RIBOSOMAL PROTEIN"/>
    <property type="match status" value="1"/>
</dbReference>
<dbReference type="PANTHER" id="PTHR11831:SF4">
    <property type="entry name" value="SMALL RIBOSOMAL SUBUNIT PROTEIN US4M"/>
    <property type="match status" value="1"/>
</dbReference>
<dbReference type="Pfam" id="PF00163">
    <property type="entry name" value="Ribosomal_S4"/>
    <property type="match status" value="1"/>
</dbReference>
<dbReference type="Pfam" id="PF01479">
    <property type="entry name" value="S4"/>
    <property type="match status" value="1"/>
</dbReference>
<dbReference type="SMART" id="SM01390">
    <property type="entry name" value="Ribosomal_S4"/>
    <property type="match status" value="1"/>
</dbReference>
<dbReference type="SMART" id="SM00363">
    <property type="entry name" value="S4"/>
    <property type="match status" value="1"/>
</dbReference>
<dbReference type="SUPFAM" id="SSF55174">
    <property type="entry name" value="Alpha-L RNA-binding motif"/>
    <property type="match status" value="1"/>
</dbReference>
<dbReference type="PROSITE" id="PS50889">
    <property type="entry name" value="S4"/>
    <property type="match status" value="1"/>
</dbReference>
<feature type="chain" id="PRO_0000322264" description="Small ribosomal subunit protein uS4">
    <location>
        <begin position="1"/>
        <end position="208"/>
    </location>
</feature>
<feature type="domain" description="S4 RNA-binding" evidence="1">
    <location>
        <begin position="98"/>
        <end position="161"/>
    </location>
</feature>
<keyword id="KW-1185">Reference proteome</keyword>
<keyword id="KW-0687">Ribonucleoprotein</keyword>
<keyword id="KW-0689">Ribosomal protein</keyword>
<keyword id="KW-0694">RNA-binding</keyword>
<keyword id="KW-0699">rRNA-binding</keyword>
<sequence>MARYRGPVEKIERRLDADLGLKGERRLSGKSALEKRPFAPGQHGQRRAKISEYGLQLREKQKVKFMYGISEKQFRNYFKEAVRREGNTGAILISLIEQRLDNVVFRMGFATTRANARQFTTHGHVLVDGKKVDIPSYLVKPGQKIEIKEKSKSNPQVVRALELTNQTGMVDWVNVDKDKVFGIFTRIPAREEVVIPVEERLIVELYSK</sequence>
<name>RS4_ALIB4</name>
<gene>
    <name evidence="1" type="primary">rpsD</name>
    <name type="ordered locus">Abu_1019</name>
</gene>
<comment type="function">
    <text evidence="1">One of the primary rRNA binding proteins, it binds directly to 16S rRNA where it nucleates assembly of the body of the 30S subunit.</text>
</comment>
<comment type="function">
    <text evidence="1">With S5 and S12 plays an important role in translational accuracy.</text>
</comment>
<comment type="subunit">
    <text evidence="1">Part of the 30S ribosomal subunit. Contacts protein S5. The interaction surface between S4 and S5 is involved in control of translational fidelity.</text>
</comment>
<comment type="similarity">
    <text evidence="1">Belongs to the universal ribosomal protein uS4 family.</text>
</comment>
<reference key="1">
    <citation type="journal article" date="2007" name="PLoS ONE">
        <title>The complete genome sequence and analysis of the Epsilonproteobacterium Arcobacter butzleri.</title>
        <authorList>
            <person name="Miller W.G."/>
            <person name="Parker C.T."/>
            <person name="Rubenfield M."/>
            <person name="Mendz G.L."/>
            <person name="Woesten M.M.S.M."/>
            <person name="Ussery D.W."/>
            <person name="Stolz J.F."/>
            <person name="Binnewies T.T."/>
            <person name="Hallin P.F."/>
            <person name="Wang G."/>
            <person name="Malek J.A."/>
            <person name="Rogosin A."/>
            <person name="Stanker L.H."/>
            <person name="Mandrell R.E."/>
        </authorList>
    </citation>
    <scope>NUCLEOTIDE SEQUENCE [LARGE SCALE GENOMIC DNA]</scope>
    <source>
        <strain>RM4018</strain>
    </source>
</reference>